<feature type="chain" id="PRO_1000212617" description="Probable transcriptional regulatory protein PC1_1817">
    <location>
        <begin position="1"/>
        <end position="247"/>
    </location>
</feature>
<keyword id="KW-0963">Cytoplasm</keyword>
<keyword id="KW-0238">DNA-binding</keyword>
<keyword id="KW-0804">Transcription</keyword>
<keyword id="KW-0805">Transcription regulation</keyword>
<reference key="1">
    <citation type="submission" date="2009-07" db="EMBL/GenBank/DDBJ databases">
        <title>Complete sequence of Pectobacterium carotovorum subsp. carotovorum PC1.</title>
        <authorList>
            <consortium name="US DOE Joint Genome Institute"/>
            <person name="Lucas S."/>
            <person name="Copeland A."/>
            <person name="Lapidus A."/>
            <person name="Glavina del Rio T."/>
            <person name="Tice H."/>
            <person name="Bruce D."/>
            <person name="Goodwin L."/>
            <person name="Pitluck S."/>
            <person name="Munk A.C."/>
            <person name="Brettin T."/>
            <person name="Detter J.C."/>
            <person name="Han C."/>
            <person name="Tapia R."/>
            <person name="Larimer F."/>
            <person name="Land M."/>
            <person name="Hauser L."/>
            <person name="Kyrpides N."/>
            <person name="Mikhailova N."/>
            <person name="Balakrishnan V."/>
            <person name="Glasner J."/>
            <person name="Perna N.T."/>
        </authorList>
    </citation>
    <scope>NUCLEOTIDE SEQUENCE [LARGE SCALE GENOMIC DNA]</scope>
    <source>
        <strain>PC1</strain>
    </source>
</reference>
<comment type="subcellular location">
    <subcellularLocation>
        <location evidence="1">Cytoplasm</location>
    </subcellularLocation>
</comment>
<comment type="similarity">
    <text evidence="1">Belongs to the TACO1 family.</text>
</comment>
<name>Y1817_PECCP</name>
<dbReference type="EMBL" id="CP001657">
    <property type="protein sequence ID" value="ACT12858.1"/>
    <property type="molecule type" value="Genomic_DNA"/>
</dbReference>
<dbReference type="RefSeq" id="WP_015840062.1">
    <property type="nucleotide sequence ID" value="NC_012917.1"/>
</dbReference>
<dbReference type="SMR" id="C6DFE9"/>
<dbReference type="STRING" id="561230.PC1_1817"/>
<dbReference type="KEGG" id="pct:PC1_1817"/>
<dbReference type="eggNOG" id="COG0217">
    <property type="taxonomic scope" value="Bacteria"/>
</dbReference>
<dbReference type="HOGENOM" id="CLU_062974_2_2_6"/>
<dbReference type="OrthoDB" id="9781053at2"/>
<dbReference type="Proteomes" id="UP000002736">
    <property type="component" value="Chromosome"/>
</dbReference>
<dbReference type="GO" id="GO:0005829">
    <property type="term" value="C:cytosol"/>
    <property type="evidence" value="ECO:0007669"/>
    <property type="project" value="TreeGrafter"/>
</dbReference>
<dbReference type="GO" id="GO:0003677">
    <property type="term" value="F:DNA binding"/>
    <property type="evidence" value="ECO:0007669"/>
    <property type="project" value="UniProtKB-UniRule"/>
</dbReference>
<dbReference type="GO" id="GO:0006355">
    <property type="term" value="P:regulation of DNA-templated transcription"/>
    <property type="evidence" value="ECO:0007669"/>
    <property type="project" value="UniProtKB-UniRule"/>
</dbReference>
<dbReference type="FunFam" id="1.10.10.200:FF:000001">
    <property type="entry name" value="Probable transcriptional regulatory protein YebC"/>
    <property type="match status" value="1"/>
</dbReference>
<dbReference type="FunFam" id="3.30.70.980:FF:000002">
    <property type="entry name" value="Probable transcriptional regulatory protein YebC"/>
    <property type="match status" value="1"/>
</dbReference>
<dbReference type="Gene3D" id="1.10.10.200">
    <property type="match status" value="1"/>
</dbReference>
<dbReference type="Gene3D" id="3.30.70.980">
    <property type="match status" value="2"/>
</dbReference>
<dbReference type="HAMAP" id="MF_00693">
    <property type="entry name" value="Transcrip_reg_TACO1"/>
    <property type="match status" value="1"/>
</dbReference>
<dbReference type="InterPro" id="IPR017856">
    <property type="entry name" value="Integrase-like_N"/>
</dbReference>
<dbReference type="InterPro" id="IPR048300">
    <property type="entry name" value="TACO1_YebC-like_2nd/3rd_dom"/>
</dbReference>
<dbReference type="InterPro" id="IPR049083">
    <property type="entry name" value="TACO1_YebC_N"/>
</dbReference>
<dbReference type="InterPro" id="IPR002876">
    <property type="entry name" value="Transcrip_reg_TACO1-like"/>
</dbReference>
<dbReference type="InterPro" id="IPR026564">
    <property type="entry name" value="Transcrip_reg_TACO1-like_dom3"/>
</dbReference>
<dbReference type="InterPro" id="IPR029072">
    <property type="entry name" value="YebC-like"/>
</dbReference>
<dbReference type="NCBIfam" id="NF001030">
    <property type="entry name" value="PRK00110.1"/>
    <property type="match status" value="1"/>
</dbReference>
<dbReference type="NCBIfam" id="NF009044">
    <property type="entry name" value="PRK12378.1"/>
    <property type="match status" value="1"/>
</dbReference>
<dbReference type="NCBIfam" id="TIGR01033">
    <property type="entry name" value="YebC/PmpR family DNA-binding transcriptional regulator"/>
    <property type="match status" value="1"/>
</dbReference>
<dbReference type="PANTHER" id="PTHR12532:SF6">
    <property type="entry name" value="TRANSCRIPTIONAL REGULATORY PROTEIN YEBC-RELATED"/>
    <property type="match status" value="1"/>
</dbReference>
<dbReference type="PANTHER" id="PTHR12532">
    <property type="entry name" value="TRANSLATIONAL ACTIVATOR OF CYTOCHROME C OXIDASE 1"/>
    <property type="match status" value="1"/>
</dbReference>
<dbReference type="Pfam" id="PF20772">
    <property type="entry name" value="TACO1_YebC_N"/>
    <property type="match status" value="1"/>
</dbReference>
<dbReference type="Pfam" id="PF01709">
    <property type="entry name" value="Transcrip_reg"/>
    <property type="match status" value="1"/>
</dbReference>
<dbReference type="SUPFAM" id="SSF75625">
    <property type="entry name" value="YebC-like"/>
    <property type="match status" value="1"/>
</dbReference>
<sequence>MAGHSKWANTKHRKAAQDAKRGKIFTKIIRELVTAARLGGGDPGSNPRLRAAIDKALSNNMTRDTLNRAIARGVGGDEDANMETIIYEGYGPGGTAVMVECLSDNRNRTVSEVRHAFTKTGGNLGTDGSVSYLFTKKGVISYAPGLDEDAVMDAALEAGADDVVTYDDGAIDVFTPWETFGNVKDALDAAGLKAESAEVSMIPSTKADMDAETAPKLMRLIDMLEDCDDVQEVYHNGEISDEVAELL</sequence>
<gene>
    <name type="ordered locus">PC1_1817</name>
</gene>
<organism>
    <name type="scientific">Pectobacterium carotovorum subsp. carotovorum (strain PC1)</name>
    <dbReference type="NCBI Taxonomy" id="561230"/>
    <lineage>
        <taxon>Bacteria</taxon>
        <taxon>Pseudomonadati</taxon>
        <taxon>Pseudomonadota</taxon>
        <taxon>Gammaproteobacteria</taxon>
        <taxon>Enterobacterales</taxon>
        <taxon>Pectobacteriaceae</taxon>
        <taxon>Pectobacterium</taxon>
    </lineage>
</organism>
<evidence type="ECO:0000255" key="1">
    <source>
        <dbReference type="HAMAP-Rule" id="MF_00693"/>
    </source>
</evidence>
<protein>
    <recommendedName>
        <fullName evidence="1">Probable transcriptional regulatory protein PC1_1817</fullName>
    </recommendedName>
</protein>
<proteinExistence type="inferred from homology"/>
<accession>C6DFE9</accession>